<comment type="function">
    <text evidence="1">NDH-1 shuttles electrons from NADH, via FMN and iron-sulfur (Fe-S) centers, to quinones in the respiratory chain. The immediate electron acceptor for the enzyme in this species is believed to be ubiquinone. Couples the redox reaction to proton translocation (for every two electrons transferred, four hydrogen ions are translocated across the cytoplasmic membrane), and thus conserves the redox energy in a proton gradient.</text>
</comment>
<comment type="catalytic activity">
    <reaction evidence="1">
        <text>a quinone + NADH + 5 H(+)(in) = a quinol + NAD(+) + 4 H(+)(out)</text>
        <dbReference type="Rhea" id="RHEA:57888"/>
        <dbReference type="ChEBI" id="CHEBI:15378"/>
        <dbReference type="ChEBI" id="CHEBI:24646"/>
        <dbReference type="ChEBI" id="CHEBI:57540"/>
        <dbReference type="ChEBI" id="CHEBI:57945"/>
        <dbReference type="ChEBI" id="CHEBI:132124"/>
    </reaction>
</comment>
<comment type="subunit">
    <text evidence="1">NDH-1 is composed of 14 different subunits. Subunits NuoA, H, J, K, L, M, N constitute the membrane sector of the complex.</text>
</comment>
<comment type="subcellular location">
    <subcellularLocation>
        <location evidence="1">Cell inner membrane</location>
        <topology evidence="1">Multi-pass membrane protein</topology>
    </subcellularLocation>
</comment>
<comment type="similarity">
    <text evidence="1">Belongs to the complex I subunit 4L family.</text>
</comment>
<dbReference type="EC" id="7.1.1.-" evidence="1"/>
<dbReference type="EMBL" id="BX897700">
    <property type="protein sequence ID" value="CAF26066.1"/>
    <property type="molecule type" value="Genomic_DNA"/>
</dbReference>
<dbReference type="RefSeq" id="WP_011179336.1">
    <property type="nucleotide sequence ID" value="NC_005955.1"/>
</dbReference>
<dbReference type="SMR" id="Q6FZY1"/>
<dbReference type="KEGG" id="bqu:BQ05740"/>
<dbReference type="eggNOG" id="COG0713">
    <property type="taxonomic scope" value="Bacteria"/>
</dbReference>
<dbReference type="HOGENOM" id="CLU_144724_2_0_5"/>
<dbReference type="OrthoDB" id="9811124at2"/>
<dbReference type="Proteomes" id="UP000000597">
    <property type="component" value="Chromosome"/>
</dbReference>
<dbReference type="GO" id="GO:0030964">
    <property type="term" value="C:NADH dehydrogenase complex"/>
    <property type="evidence" value="ECO:0007669"/>
    <property type="project" value="TreeGrafter"/>
</dbReference>
<dbReference type="GO" id="GO:0005886">
    <property type="term" value="C:plasma membrane"/>
    <property type="evidence" value="ECO:0007669"/>
    <property type="project" value="UniProtKB-SubCell"/>
</dbReference>
<dbReference type="GO" id="GO:0050136">
    <property type="term" value="F:NADH:ubiquinone reductase (non-electrogenic) activity"/>
    <property type="evidence" value="ECO:0007669"/>
    <property type="project" value="UniProtKB-UniRule"/>
</dbReference>
<dbReference type="GO" id="GO:0048038">
    <property type="term" value="F:quinone binding"/>
    <property type="evidence" value="ECO:0007669"/>
    <property type="project" value="UniProtKB-KW"/>
</dbReference>
<dbReference type="GO" id="GO:0042773">
    <property type="term" value="P:ATP synthesis coupled electron transport"/>
    <property type="evidence" value="ECO:0007669"/>
    <property type="project" value="InterPro"/>
</dbReference>
<dbReference type="FunFam" id="1.10.287.3510:FF:000001">
    <property type="entry name" value="NADH-quinone oxidoreductase subunit K"/>
    <property type="match status" value="1"/>
</dbReference>
<dbReference type="Gene3D" id="1.10.287.3510">
    <property type="match status" value="1"/>
</dbReference>
<dbReference type="HAMAP" id="MF_01456">
    <property type="entry name" value="NDH1_NuoK"/>
    <property type="match status" value="1"/>
</dbReference>
<dbReference type="InterPro" id="IPR001133">
    <property type="entry name" value="NADH_UbQ_OxRdtase_chain4L/K"/>
</dbReference>
<dbReference type="InterPro" id="IPR039428">
    <property type="entry name" value="NUOK/Mnh_C1-like"/>
</dbReference>
<dbReference type="NCBIfam" id="NF004320">
    <property type="entry name" value="PRK05715.1-2"/>
    <property type="match status" value="1"/>
</dbReference>
<dbReference type="NCBIfam" id="NF004321">
    <property type="entry name" value="PRK05715.1-3"/>
    <property type="match status" value="1"/>
</dbReference>
<dbReference type="NCBIfam" id="NF004323">
    <property type="entry name" value="PRK05715.1-5"/>
    <property type="match status" value="1"/>
</dbReference>
<dbReference type="PANTHER" id="PTHR11434:SF21">
    <property type="entry name" value="NADH DEHYDROGENASE SUBUNIT 4L-RELATED"/>
    <property type="match status" value="1"/>
</dbReference>
<dbReference type="PANTHER" id="PTHR11434">
    <property type="entry name" value="NADH-UBIQUINONE OXIDOREDUCTASE SUBUNIT ND4L"/>
    <property type="match status" value="1"/>
</dbReference>
<dbReference type="Pfam" id="PF00420">
    <property type="entry name" value="Oxidored_q2"/>
    <property type="match status" value="1"/>
</dbReference>
<sequence length="102" mass="11085">MHIDITHYLIVSALIFTIGIAGIFLNRKNVIIILMSIELILLSVNLNFVAFSAFFQDLVGQIFALFILTVAAAEAAIGLAILVVFFRNCGSIAVEDVNVMKG</sequence>
<protein>
    <recommendedName>
        <fullName evidence="1">NADH-quinone oxidoreductase subunit K</fullName>
        <ecNumber evidence="1">7.1.1.-</ecNumber>
    </recommendedName>
    <alternativeName>
        <fullName evidence="1">NADH dehydrogenase I subunit K</fullName>
    </alternativeName>
    <alternativeName>
        <fullName evidence="1">NDH-1 subunit K</fullName>
    </alternativeName>
</protein>
<accession>Q6FZY1</accession>
<feature type="chain" id="PRO_0000389954" description="NADH-quinone oxidoreductase subunit K">
    <location>
        <begin position="1"/>
        <end position="102"/>
    </location>
</feature>
<feature type="transmembrane region" description="Helical" evidence="1">
    <location>
        <begin position="5"/>
        <end position="25"/>
    </location>
</feature>
<feature type="transmembrane region" description="Helical" evidence="1">
    <location>
        <begin position="31"/>
        <end position="51"/>
    </location>
</feature>
<feature type="transmembrane region" description="Helical" evidence="1">
    <location>
        <begin position="66"/>
        <end position="86"/>
    </location>
</feature>
<evidence type="ECO:0000255" key="1">
    <source>
        <dbReference type="HAMAP-Rule" id="MF_01456"/>
    </source>
</evidence>
<proteinExistence type="inferred from homology"/>
<organism>
    <name type="scientific">Bartonella quintana (strain Toulouse)</name>
    <name type="common">Rochalimaea quintana</name>
    <dbReference type="NCBI Taxonomy" id="283165"/>
    <lineage>
        <taxon>Bacteria</taxon>
        <taxon>Pseudomonadati</taxon>
        <taxon>Pseudomonadota</taxon>
        <taxon>Alphaproteobacteria</taxon>
        <taxon>Hyphomicrobiales</taxon>
        <taxon>Bartonellaceae</taxon>
        <taxon>Bartonella</taxon>
    </lineage>
</organism>
<gene>
    <name evidence="1" type="primary">nuoK</name>
    <name type="ordered locus">BQ05740</name>
</gene>
<keyword id="KW-0997">Cell inner membrane</keyword>
<keyword id="KW-1003">Cell membrane</keyword>
<keyword id="KW-0472">Membrane</keyword>
<keyword id="KW-0520">NAD</keyword>
<keyword id="KW-0874">Quinone</keyword>
<keyword id="KW-1278">Translocase</keyword>
<keyword id="KW-0812">Transmembrane</keyword>
<keyword id="KW-1133">Transmembrane helix</keyword>
<keyword id="KW-0813">Transport</keyword>
<keyword id="KW-0830">Ubiquinone</keyword>
<reference key="1">
    <citation type="journal article" date="2004" name="Proc. Natl. Acad. Sci. U.S.A.">
        <title>The louse-borne human pathogen Bartonella quintana is a genomic derivative of the zoonotic agent Bartonella henselae.</title>
        <authorList>
            <person name="Alsmark U.C.M."/>
            <person name="Frank A.C."/>
            <person name="Karlberg E.O."/>
            <person name="Legault B.-A."/>
            <person name="Ardell D.H."/>
            <person name="Canbaeck B."/>
            <person name="Eriksson A.-S."/>
            <person name="Naeslund A.K."/>
            <person name="Handley S.A."/>
            <person name="Huvet M."/>
            <person name="La Scola B."/>
            <person name="Holmberg M."/>
            <person name="Andersson S.G.E."/>
        </authorList>
    </citation>
    <scope>NUCLEOTIDE SEQUENCE [LARGE SCALE GENOMIC DNA]</scope>
    <source>
        <strain>Toulouse</strain>
    </source>
</reference>
<name>NUOK_BARQU</name>